<gene>
    <name type="ordered locus">BA_4060</name>
    <name type="ordered locus">GBAA_4060</name>
    <name type="ordered locus">BAS3772</name>
</gene>
<accession>Q81WC0</accession>
<accession>Q6HUG5</accession>
<accession>Q6KNQ2</accession>
<organism>
    <name type="scientific">Bacillus anthracis</name>
    <dbReference type="NCBI Taxonomy" id="1392"/>
    <lineage>
        <taxon>Bacteria</taxon>
        <taxon>Bacillati</taxon>
        <taxon>Bacillota</taxon>
        <taxon>Bacilli</taxon>
        <taxon>Bacillales</taxon>
        <taxon>Bacillaceae</taxon>
        <taxon>Bacillus</taxon>
        <taxon>Bacillus cereus group</taxon>
    </lineage>
</organism>
<keyword id="KW-0012">Acyltransferase</keyword>
<keyword id="KW-1185">Reference proteome</keyword>
<keyword id="KW-0808">Transferase</keyword>
<evidence type="ECO:0000255" key="1">
    <source>
        <dbReference type="HAMAP-Rule" id="MF_00824"/>
    </source>
</evidence>
<name>Y4060_BACAN</name>
<proteinExistence type="inferred from homology"/>
<protein>
    <recommendedName>
        <fullName evidence="1">Uncharacterized N-acetyltransferase BA_4060/GBAA_4060/BAS3772</fullName>
        <ecNumber evidence="1">2.3.1.-</ecNumber>
    </recommendedName>
</protein>
<reference key="1">
    <citation type="journal article" date="2003" name="Nature">
        <title>The genome sequence of Bacillus anthracis Ames and comparison to closely related bacteria.</title>
        <authorList>
            <person name="Read T.D."/>
            <person name="Peterson S.N."/>
            <person name="Tourasse N.J."/>
            <person name="Baillie L.W."/>
            <person name="Paulsen I.T."/>
            <person name="Nelson K.E."/>
            <person name="Tettelin H."/>
            <person name="Fouts D.E."/>
            <person name="Eisen J.A."/>
            <person name="Gill S.R."/>
            <person name="Holtzapple E.K."/>
            <person name="Okstad O.A."/>
            <person name="Helgason E."/>
            <person name="Rilstone J."/>
            <person name="Wu M."/>
            <person name="Kolonay J.F."/>
            <person name="Beanan M.J."/>
            <person name="Dodson R.J."/>
            <person name="Brinkac L.M."/>
            <person name="Gwinn M.L."/>
            <person name="DeBoy R.T."/>
            <person name="Madpu R."/>
            <person name="Daugherty S.C."/>
            <person name="Durkin A.S."/>
            <person name="Haft D.H."/>
            <person name="Nelson W.C."/>
            <person name="Peterson J.D."/>
            <person name="Pop M."/>
            <person name="Khouri H.M."/>
            <person name="Radune D."/>
            <person name="Benton J.L."/>
            <person name="Mahamoud Y."/>
            <person name="Jiang L."/>
            <person name="Hance I.R."/>
            <person name="Weidman J.F."/>
            <person name="Berry K.J."/>
            <person name="Plaut R.D."/>
            <person name="Wolf A.M."/>
            <person name="Watkins K.L."/>
            <person name="Nierman W.C."/>
            <person name="Hazen A."/>
            <person name="Cline R.T."/>
            <person name="Redmond C."/>
            <person name="Thwaite J.E."/>
            <person name="White O."/>
            <person name="Salzberg S.L."/>
            <person name="Thomason B."/>
            <person name="Friedlander A.M."/>
            <person name="Koehler T.M."/>
            <person name="Hanna P.C."/>
            <person name="Kolstoe A.-B."/>
            <person name="Fraser C.M."/>
        </authorList>
    </citation>
    <scope>NUCLEOTIDE SEQUENCE [LARGE SCALE GENOMIC DNA]</scope>
    <source>
        <strain>Ames / isolate Porton</strain>
    </source>
</reference>
<reference key="2">
    <citation type="journal article" date="2009" name="J. Bacteriol.">
        <title>The complete genome sequence of Bacillus anthracis Ames 'Ancestor'.</title>
        <authorList>
            <person name="Ravel J."/>
            <person name="Jiang L."/>
            <person name="Stanley S.T."/>
            <person name="Wilson M.R."/>
            <person name="Decker R.S."/>
            <person name="Read T.D."/>
            <person name="Worsham P."/>
            <person name="Keim P.S."/>
            <person name="Salzberg S.L."/>
            <person name="Fraser-Liggett C.M."/>
            <person name="Rasko D.A."/>
        </authorList>
    </citation>
    <scope>NUCLEOTIDE SEQUENCE [LARGE SCALE GENOMIC DNA]</scope>
    <source>
        <strain>Ames ancestor</strain>
    </source>
</reference>
<reference key="3">
    <citation type="submission" date="2004-01" db="EMBL/GenBank/DDBJ databases">
        <title>Complete genome sequence of Bacillus anthracis Sterne.</title>
        <authorList>
            <person name="Brettin T.S."/>
            <person name="Bruce D."/>
            <person name="Challacombe J.F."/>
            <person name="Gilna P."/>
            <person name="Han C."/>
            <person name="Hill K."/>
            <person name="Hitchcock P."/>
            <person name="Jackson P."/>
            <person name="Keim P."/>
            <person name="Longmire J."/>
            <person name="Lucas S."/>
            <person name="Okinaka R."/>
            <person name="Richardson P."/>
            <person name="Rubin E."/>
            <person name="Tice H."/>
        </authorList>
    </citation>
    <scope>NUCLEOTIDE SEQUENCE [LARGE SCALE GENOMIC DNA]</scope>
    <source>
        <strain>Sterne</strain>
    </source>
</reference>
<feature type="chain" id="PRO_0000232471" description="Uncharacterized N-acetyltransferase BA_4060/GBAA_4060/BAS3772">
    <location>
        <begin position="1"/>
        <end position="157"/>
    </location>
</feature>
<feature type="domain" description="N-acetyltransferase" evidence="1">
    <location>
        <begin position="9"/>
        <end position="146"/>
    </location>
</feature>
<dbReference type="EC" id="2.3.1.-" evidence="1"/>
<dbReference type="EMBL" id="AE016879">
    <property type="protein sequence ID" value="AAP27786.1"/>
    <property type="molecule type" value="Genomic_DNA"/>
</dbReference>
<dbReference type="EMBL" id="AE017334">
    <property type="protein sequence ID" value="AAT33179.1"/>
    <property type="molecule type" value="Genomic_DNA"/>
</dbReference>
<dbReference type="EMBL" id="AE017225">
    <property type="protein sequence ID" value="AAT56074.1"/>
    <property type="molecule type" value="Genomic_DNA"/>
</dbReference>
<dbReference type="RefSeq" id="NP_846300.1">
    <property type="nucleotide sequence ID" value="NC_003997.3"/>
</dbReference>
<dbReference type="RefSeq" id="WP_000506700.1">
    <property type="nucleotide sequence ID" value="NZ_WXXJ01000026.1"/>
</dbReference>
<dbReference type="RefSeq" id="YP_030023.1">
    <property type="nucleotide sequence ID" value="NC_005945.1"/>
</dbReference>
<dbReference type="SMR" id="Q81WC0"/>
<dbReference type="STRING" id="261594.GBAA_4060"/>
<dbReference type="DNASU" id="1085555"/>
<dbReference type="GeneID" id="45023750"/>
<dbReference type="KEGG" id="ban:BA_4060"/>
<dbReference type="KEGG" id="bar:GBAA_4060"/>
<dbReference type="KEGG" id="bat:BAS3772"/>
<dbReference type="PATRIC" id="fig|198094.11.peg.4032"/>
<dbReference type="eggNOG" id="COG0454">
    <property type="taxonomic scope" value="Bacteria"/>
</dbReference>
<dbReference type="HOGENOM" id="CLU_136634_0_0_9"/>
<dbReference type="OMA" id="IWHPDMD"/>
<dbReference type="OrthoDB" id="2242710at2"/>
<dbReference type="Proteomes" id="UP000000427">
    <property type="component" value="Chromosome"/>
</dbReference>
<dbReference type="Proteomes" id="UP000000594">
    <property type="component" value="Chromosome"/>
</dbReference>
<dbReference type="GO" id="GO:0016747">
    <property type="term" value="F:acyltransferase activity, transferring groups other than amino-acyl groups"/>
    <property type="evidence" value="ECO:0007669"/>
    <property type="project" value="UniProtKB-UniRule"/>
</dbReference>
<dbReference type="CDD" id="cd04301">
    <property type="entry name" value="NAT_SF"/>
    <property type="match status" value="1"/>
</dbReference>
<dbReference type="Gene3D" id="3.40.630.30">
    <property type="match status" value="1"/>
</dbReference>
<dbReference type="HAMAP" id="MF_00824">
    <property type="entry name" value="Acetyltransf_YlbP"/>
    <property type="match status" value="1"/>
</dbReference>
<dbReference type="InterPro" id="IPR016181">
    <property type="entry name" value="Acyl_CoA_acyltransferase"/>
</dbReference>
<dbReference type="InterPro" id="IPR000182">
    <property type="entry name" value="GNAT_dom"/>
</dbReference>
<dbReference type="InterPro" id="IPR017274">
    <property type="entry name" value="YlbP"/>
</dbReference>
<dbReference type="NCBIfam" id="NF010241">
    <property type="entry name" value="PRK13688.1"/>
    <property type="match status" value="1"/>
</dbReference>
<dbReference type="Pfam" id="PF00583">
    <property type="entry name" value="Acetyltransf_1"/>
    <property type="match status" value="1"/>
</dbReference>
<dbReference type="PIRSF" id="PIRSF037732">
    <property type="entry name" value="YlbP_prd"/>
    <property type="match status" value="1"/>
</dbReference>
<dbReference type="SUPFAM" id="SSF55729">
    <property type="entry name" value="Acyl-CoA N-acyltransferases (Nat)"/>
    <property type="match status" value="1"/>
</dbReference>
<sequence length="157" mass="17938">MGFPKVERLLINYKTLDEFKKFKGCGAQELSMLEELQANIIENDSESPFYGIYYGGSLIARMSLYMKRNGGEPFEITGTYLELYKLEVLPNFQKQGFGEMLVNYAKGLQFPIKTIARIHSAGFWDKLNFQPVSVPDGDFYVWHPETNLNAVTNEESA</sequence>